<dbReference type="EMBL" id="AJ235271">
    <property type="protein sequence ID" value="CAA14819.1"/>
    <property type="molecule type" value="Genomic_DNA"/>
</dbReference>
<dbReference type="PIR" id="A71693">
    <property type="entry name" value="A71693"/>
</dbReference>
<dbReference type="RefSeq" id="NP_220743.1">
    <property type="nucleotide sequence ID" value="NC_000963.1"/>
</dbReference>
<dbReference type="RefSeq" id="WP_004597499.1">
    <property type="nucleotide sequence ID" value="NC_000963.1"/>
</dbReference>
<dbReference type="STRING" id="272947.gene:17555439"/>
<dbReference type="EnsemblBacteria" id="CAA14819">
    <property type="protein sequence ID" value="CAA14819"/>
    <property type="gene ID" value="CAA14819"/>
</dbReference>
<dbReference type="KEGG" id="rpr:RP359"/>
<dbReference type="PATRIC" id="fig|272947.5.peg.369"/>
<dbReference type="eggNOG" id="COG4765">
    <property type="taxonomic scope" value="Bacteria"/>
</dbReference>
<dbReference type="HOGENOM" id="CLU_1634102_0_0_5"/>
<dbReference type="OrthoDB" id="9810376at2"/>
<dbReference type="Proteomes" id="UP000002480">
    <property type="component" value="Chromosome"/>
</dbReference>
<dbReference type="InterPro" id="IPR019225">
    <property type="entry name" value="DUF2155"/>
</dbReference>
<dbReference type="Pfam" id="PF09923">
    <property type="entry name" value="DUF2155"/>
    <property type="match status" value="1"/>
</dbReference>
<accession>Q9ZDG9</accession>
<protein>
    <recommendedName>
        <fullName>Uncharacterized protein RP359</fullName>
    </recommendedName>
</protein>
<name>Y359_RICPR</name>
<organism>
    <name type="scientific">Rickettsia prowazekii (strain Madrid E)</name>
    <dbReference type="NCBI Taxonomy" id="272947"/>
    <lineage>
        <taxon>Bacteria</taxon>
        <taxon>Pseudomonadati</taxon>
        <taxon>Pseudomonadota</taxon>
        <taxon>Alphaproteobacteria</taxon>
        <taxon>Rickettsiales</taxon>
        <taxon>Rickettsiaceae</taxon>
        <taxon>Rickettsieae</taxon>
        <taxon>Rickettsia</taxon>
        <taxon>typhus group</taxon>
    </lineage>
</organism>
<gene>
    <name type="ordered locus">RP359</name>
</gene>
<keyword id="KW-1185">Reference proteome</keyword>
<proteinExistence type="predicted"/>
<feature type="chain" id="PRO_0000101353" description="Uncharacterized protein RP359">
    <location>
        <begin position="1"/>
        <end position="155"/>
    </location>
</feature>
<sequence>MKLLQIIFIITIYINLHIFVLAENLESVEDSENDVFIPLDKNHPILNQKDNIYSAEFKNYTNGKIIALNKITATSEEIGLKAGEEKYFGNIKIKLHKCIKNLDPYNQDNYLLMTITEYKIDEDPTLLFQGWMVSSSISLSTFEHPIYEIFAKDCF</sequence>
<reference key="1">
    <citation type="journal article" date="1998" name="Nature">
        <title>The genome sequence of Rickettsia prowazekii and the origin of mitochondria.</title>
        <authorList>
            <person name="Andersson S.G.E."/>
            <person name="Zomorodipour A."/>
            <person name="Andersson J.O."/>
            <person name="Sicheritz-Ponten T."/>
            <person name="Alsmark U.C.M."/>
            <person name="Podowski R.M."/>
            <person name="Naeslund A.K."/>
            <person name="Eriksson A.-S."/>
            <person name="Winkler H.H."/>
            <person name="Kurland C.G."/>
        </authorList>
    </citation>
    <scope>NUCLEOTIDE SEQUENCE [LARGE SCALE GENOMIC DNA]</scope>
    <source>
        <strain>Madrid E</strain>
    </source>
</reference>